<keyword id="KW-0665">Pyrimidine biosynthesis</keyword>
<keyword id="KW-0808">Transferase</keyword>
<name>PYRB_XANC8</name>
<protein>
    <recommendedName>
        <fullName evidence="1">Aspartate carbamoyltransferase catalytic subunit</fullName>
        <ecNumber evidence="1">2.1.3.2</ecNumber>
    </recommendedName>
    <alternativeName>
        <fullName evidence="1">Aspartate transcarbamylase</fullName>
        <shortName evidence="1">ATCase</shortName>
    </alternativeName>
</protein>
<gene>
    <name evidence="1" type="primary">pyrB</name>
    <name type="ordered locus">XC_1367</name>
</gene>
<evidence type="ECO:0000255" key="1">
    <source>
        <dbReference type="HAMAP-Rule" id="MF_00001"/>
    </source>
</evidence>
<reference key="1">
    <citation type="journal article" date="2005" name="Genome Res.">
        <title>Comparative and functional genomic analyses of the pathogenicity of phytopathogen Xanthomonas campestris pv. campestris.</title>
        <authorList>
            <person name="Qian W."/>
            <person name="Jia Y."/>
            <person name="Ren S.-X."/>
            <person name="He Y.-Q."/>
            <person name="Feng J.-X."/>
            <person name="Lu L.-F."/>
            <person name="Sun Q."/>
            <person name="Ying G."/>
            <person name="Tang D.-J."/>
            <person name="Tang H."/>
            <person name="Wu W."/>
            <person name="Hao P."/>
            <person name="Wang L."/>
            <person name="Jiang B.-L."/>
            <person name="Zeng S."/>
            <person name="Gu W.-Y."/>
            <person name="Lu G."/>
            <person name="Rong L."/>
            <person name="Tian Y."/>
            <person name="Yao Z."/>
            <person name="Fu G."/>
            <person name="Chen B."/>
            <person name="Fang R."/>
            <person name="Qiang B."/>
            <person name="Chen Z."/>
            <person name="Zhao G.-P."/>
            <person name="Tang J.-L."/>
            <person name="He C."/>
        </authorList>
    </citation>
    <scope>NUCLEOTIDE SEQUENCE [LARGE SCALE GENOMIC DNA]</scope>
    <source>
        <strain>8004</strain>
    </source>
</reference>
<sequence>MTTMQLDSDGRLRHLLTLEGLPRATLLQLLDRAGQIRDAAVGRVGKRSVLAGTAVCTLFFEPSTRTRSSFHLAAQRLGADVLNFDASTSSTRKGETARDTLKNLEAMGVRGFVVRHPEDGAVERLAEAAGEGTALINAGDGRSAHPTQGLLDMLTLRQAKGTDFSKLKVVIVGDVKHSRVARSDLHALRTLGAGEIRVCGPASLLPDDDMLDGCVVGEDFDAMLEGADALMMLRLQRERMEEGLVPSLEQYHADYGLTRERLARAGRDAAVLHPGPINRGVEITDEVADGAQSCVLRQVANGVAVRMAVLETLLG</sequence>
<feature type="chain" id="PRO_0000301638" description="Aspartate carbamoyltransferase catalytic subunit">
    <location>
        <begin position="1"/>
        <end position="315"/>
    </location>
</feature>
<feature type="binding site" evidence="1">
    <location>
        <position position="65"/>
    </location>
    <ligand>
        <name>carbamoyl phosphate</name>
        <dbReference type="ChEBI" id="CHEBI:58228"/>
    </ligand>
</feature>
<feature type="binding site" evidence="1">
    <location>
        <position position="66"/>
    </location>
    <ligand>
        <name>carbamoyl phosphate</name>
        <dbReference type="ChEBI" id="CHEBI:58228"/>
    </ligand>
</feature>
<feature type="binding site" evidence="1">
    <location>
        <position position="93"/>
    </location>
    <ligand>
        <name>L-aspartate</name>
        <dbReference type="ChEBI" id="CHEBI:29991"/>
    </ligand>
</feature>
<feature type="binding site" evidence="1">
    <location>
        <position position="115"/>
    </location>
    <ligand>
        <name>carbamoyl phosphate</name>
        <dbReference type="ChEBI" id="CHEBI:58228"/>
    </ligand>
</feature>
<feature type="binding site" evidence="1">
    <location>
        <position position="145"/>
    </location>
    <ligand>
        <name>carbamoyl phosphate</name>
        <dbReference type="ChEBI" id="CHEBI:58228"/>
    </ligand>
</feature>
<feature type="binding site" evidence="1">
    <location>
        <position position="148"/>
    </location>
    <ligand>
        <name>carbamoyl phosphate</name>
        <dbReference type="ChEBI" id="CHEBI:58228"/>
    </ligand>
</feature>
<feature type="binding site" evidence="1">
    <location>
        <position position="179"/>
    </location>
    <ligand>
        <name>L-aspartate</name>
        <dbReference type="ChEBI" id="CHEBI:29991"/>
    </ligand>
</feature>
<feature type="binding site" evidence="1">
    <location>
        <position position="234"/>
    </location>
    <ligand>
        <name>L-aspartate</name>
        <dbReference type="ChEBI" id="CHEBI:29991"/>
    </ligand>
</feature>
<feature type="binding site" evidence="1">
    <location>
        <position position="275"/>
    </location>
    <ligand>
        <name>carbamoyl phosphate</name>
        <dbReference type="ChEBI" id="CHEBI:58228"/>
    </ligand>
</feature>
<feature type="binding site" evidence="1">
    <location>
        <position position="276"/>
    </location>
    <ligand>
        <name>carbamoyl phosphate</name>
        <dbReference type="ChEBI" id="CHEBI:58228"/>
    </ligand>
</feature>
<dbReference type="EC" id="2.1.3.2" evidence="1"/>
<dbReference type="EMBL" id="CP000050">
    <property type="protein sequence ID" value="AAY48436.1"/>
    <property type="molecule type" value="Genomic_DNA"/>
</dbReference>
<dbReference type="RefSeq" id="WP_011037876.1">
    <property type="nucleotide sequence ID" value="NZ_CP155948.1"/>
</dbReference>
<dbReference type="SMR" id="Q4UWY7"/>
<dbReference type="KEGG" id="xcb:XC_1367"/>
<dbReference type="HOGENOM" id="CLU_043846_2_0_6"/>
<dbReference type="UniPathway" id="UPA00070">
    <property type="reaction ID" value="UER00116"/>
</dbReference>
<dbReference type="Proteomes" id="UP000000420">
    <property type="component" value="Chromosome"/>
</dbReference>
<dbReference type="GO" id="GO:0005829">
    <property type="term" value="C:cytosol"/>
    <property type="evidence" value="ECO:0007669"/>
    <property type="project" value="TreeGrafter"/>
</dbReference>
<dbReference type="GO" id="GO:0016597">
    <property type="term" value="F:amino acid binding"/>
    <property type="evidence" value="ECO:0007669"/>
    <property type="project" value="InterPro"/>
</dbReference>
<dbReference type="GO" id="GO:0004070">
    <property type="term" value="F:aspartate carbamoyltransferase activity"/>
    <property type="evidence" value="ECO:0007669"/>
    <property type="project" value="UniProtKB-UniRule"/>
</dbReference>
<dbReference type="GO" id="GO:0006207">
    <property type="term" value="P:'de novo' pyrimidine nucleobase biosynthetic process"/>
    <property type="evidence" value="ECO:0007669"/>
    <property type="project" value="InterPro"/>
</dbReference>
<dbReference type="GO" id="GO:0044205">
    <property type="term" value="P:'de novo' UMP biosynthetic process"/>
    <property type="evidence" value="ECO:0007669"/>
    <property type="project" value="UniProtKB-UniRule"/>
</dbReference>
<dbReference type="GO" id="GO:0006520">
    <property type="term" value="P:amino acid metabolic process"/>
    <property type="evidence" value="ECO:0007669"/>
    <property type="project" value="InterPro"/>
</dbReference>
<dbReference type="FunFam" id="3.40.50.1370:FF:000007">
    <property type="entry name" value="Aspartate carbamoyltransferase"/>
    <property type="match status" value="1"/>
</dbReference>
<dbReference type="FunFam" id="3.40.50.1370:FF:000019">
    <property type="entry name" value="Aspartate carbamoyltransferase"/>
    <property type="match status" value="1"/>
</dbReference>
<dbReference type="Gene3D" id="3.40.50.1370">
    <property type="entry name" value="Aspartate/ornithine carbamoyltransferase"/>
    <property type="match status" value="2"/>
</dbReference>
<dbReference type="HAMAP" id="MF_00001">
    <property type="entry name" value="Asp_carb_tr"/>
    <property type="match status" value="1"/>
</dbReference>
<dbReference type="InterPro" id="IPR006132">
    <property type="entry name" value="Asp/Orn_carbamoyltranf_P-bd"/>
</dbReference>
<dbReference type="InterPro" id="IPR006130">
    <property type="entry name" value="Asp/Orn_carbamoylTrfase"/>
</dbReference>
<dbReference type="InterPro" id="IPR036901">
    <property type="entry name" value="Asp/Orn_carbamoylTrfase_sf"/>
</dbReference>
<dbReference type="InterPro" id="IPR002082">
    <property type="entry name" value="Asp_carbamoyltransf"/>
</dbReference>
<dbReference type="InterPro" id="IPR006131">
    <property type="entry name" value="Asp_carbamoyltransf_Asp/Orn-bd"/>
</dbReference>
<dbReference type="NCBIfam" id="TIGR00670">
    <property type="entry name" value="asp_carb_tr"/>
    <property type="match status" value="1"/>
</dbReference>
<dbReference type="NCBIfam" id="NF002032">
    <property type="entry name" value="PRK00856.1"/>
    <property type="match status" value="1"/>
</dbReference>
<dbReference type="PANTHER" id="PTHR45753:SF6">
    <property type="entry name" value="ASPARTATE CARBAMOYLTRANSFERASE"/>
    <property type="match status" value="1"/>
</dbReference>
<dbReference type="PANTHER" id="PTHR45753">
    <property type="entry name" value="ORNITHINE CARBAMOYLTRANSFERASE, MITOCHONDRIAL"/>
    <property type="match status" value="1"/>
</dbReference>
<dbReference type="Pfam" id="PF00185">
    <property type="entry name" value="OTCace"/>
    <property type="match status" value="1"/>
</dbReference>
<dbReference type="Pfam" id="PF02729">
    <property type="entry name" value="OTCace_N"/>
    <property type="match status" value="1"/>
</dbReference>
<dbReference type="PRINTS" id="PR00100">
    <property type="entry name" value="AOTCASE"/>
</dbReference>
<dbReference type="PRINTS" id="PR00101">
    <property type="entry name" value="ATCASE"/>
</dbReference>
<dbReference type="SUPFAM" id="SSF53671">
    <property type="entry name" value="Aspartate/ornithine carbamoyltransferase"/>
    <property type="match status" value="1"/>
</dbReference>
<dbReference type="PROSITE" id="PS00097">
    <property type="entry name" value="CARBAMOYLTRANSFERASE"/>
    <property type="match status" value="1"/>
</dbReference>
<accession>Q4UWY7</accession>
<organism>
    <name type="scientific">Xanthomonas campestris pv. campestris (strain 8004)</name>
    <dbReference type="NCBI Taxonomy" id="314565"/>
    <lineage>
        <taxon>Bacteria</taxon>
        <taxon>Pseudomonadati</taxon>
        <taxon>Pseudomonadota</taxon>
        <taxon>Gammaproteobacteria</taxon>
        <taxon>Lysobacterales</taxon>
        <taxon>Lysobacteraceae</taxon>
        <taxon>Xanthomonas</taxon>
    </lineage>
</organism>
<proteinExistence type="inferred from homology"/>
<comment type="function">
    <text evidence="1">Catalyzes the condensation of carbamoyl phosphate and aspartate to form carbamoyl aspartate and inorganic phosphate, the committed step in the de novo pyrimidine nucleotide biosynthesis pathway.</text>
</comment>
<comment type="catalytic activity">
    <reaction evidence="1">
        <text>carbamoyl phosphate + L-aspartate = N-carbamoyl-L-aspartate + phosphate + H(+)</text>
        <dbReference type="Rhea" id="RHEA:20013"/>
        <dbReference type="ChEBI" id="CHEBI:15378"/>
        <dbReference type="ChEBI" id="CHEBI:29991"/>
        <dbReference type="ChEBI" id="CHEBI:32814"/>
        <dbReference type="ChEBI" id="CHEBI:43474"/>
        <dbReference type="ChEBI" id="CHEBI:58228"/>
        <dbReference type="EC" id="2.1.3.2"/>
    </reaction>
</comment>
<comment type="pathway">
    <text evidence="1">Pyrimidine metabolism; UMP biosynthesis via de novo pathway; (S)-dihydroorotate from bicarbonate: step 2/3.</text>
</comment>
<comment type="subunit">
    <text evidence="1">Heterododecamer (2C3:3R2) of six catalytic PyrB chains organized as two trimers (C3), and six regulatory PyrI chains organized as three dimers (R2).</text>
</comment>
<comment type="similarity">
    <text evidence="1">Belongs to the aspartate/ornithine carbamoyltransferase superfamily. ATCase family.</text>
</comment>